<sequence>MSPILTNRQAEELHKSIIAYLTANNLLDTANTLRAELNLNEDAFDPATAKKYETLLEKKWTSVVRLQKKIMDLESRMSAMQAELDNATPTSLSKRNKDPASWIPTAPARHALESHRDTINSVAFHPIFSSVASASDDCTIKIWDWELGELERTIKGHTRAVVDVDFGGPRGGILLASCSSDLSIKLWDPSNEYKNIRTLVGHDHSVSAVRFIPLGASGAPSSGNLLASASRDKSLKIWDANTGYCLRTLQGHTAWVRDVFPSPDGRFLLSTGDDSTARLWDISVSNPETKVTMFGHDHFNECCAIAPSTSYQYLSPLTGLKKPPPASSTAEFMATGSRDKKIKIWDARGTCLLTLAGHDNWIRALAFHPGGKYLFSVSDDRTLRCWDLSQEGKCIKVMRDAHERFITCLRWAPSIFKDAPTGNGASDGKNGDIKKSDSPEVQIRCVIATGGVDMKLRIFAN</sequence>
<keyword id="KW-0131">Cell cycle</keyword>
<keyword id="KW-0132">Cell division</keyword>
<keyword id="KW-0175">Coiled coil</keyword>
<keyword id="KW-0963">Cytoplasm</keyword>
<keyword id="KW-0206">Cytoskeleton</keyword>
<keyword id="KW-0493">Microtubule</keyword>
<keyword id="KW-0498">Mitosis</keyword>
<keyword id="KW-0677">Repeat</keyword>
<keyword id="KW-0813">Transport</keyword>
<keyword id="KW-0853">WD repeat</keyword>
<dbReference type="EMBL" id="ACYE01000347">
    <property type="protein sequence ID" value="EFE39167.1"/>
    <property type="molecule type" value="Genomic_DNA"/>
</dbReference>
<dbReference type="RefSeq" id="XP_003019791.1">
    <property type="nucleotide sequence ID" value="XM_003019745.1"/>
</dbReference>
<dbReference type="SMR" id="D4DG66"/>
<dbReference type="GeneID" id="9583714"/>
<dbReference type="KEGG" id="tve:TRV_06168"/>
<dbReference type="HOGENOM" id="CLU_000288_57_15_1"/>
<dbReference type="OrthoDB" id="986at34384"/>
<dbReference type="Proteomes" id="UP000008383">
    <property type="component" value="Unassembled WGS sequence"/>
</dbReference>
<dbReference type="GO" id="GO:0005737">
    <property type="term" value="C:cytoplasm"/>
    <property type="evidence" value="ECO:0007669"/>
    <property type="project" value="UniProtKB-UniRule"/>
</dbReference>
<dbReference type="GO" id="GO:0005874">
    <property type="term" value="C:microtubule"/>
    <property type="evidence" value="ECO:0007669"/>
    <property type="project" value="UniProtKB-KW"/>
</dbReference>
<dbReference type="GO" id="GO:0005875">
    <property type="term" value="C:microtubule associated complex"/>
    <property type="evidence" value="ECO:0007669"/>
    <property type="project" value="UniProtKB-UniRule"/>
</dbReference>
<dbReference type="GO" id="GO:0000922">
    <property type="term" value="C:spindle pole"/>
    <property type="evidence" value="ECO:0007669"/>
    <property type="project" value="UniProtKB-SubCell"/>
</dbReference>
<dbReference type="GO" id="GO:1990234">
    <property type="term" value="C:transferase complex"/>
    <property type="evidence" value="ECO:0007669"/>
    <property type="project" value="UniProtKB-ARBA"/>
</dbReference>
<dbReference type="GO" id="GO:0070840">
    <property type="term" value="F:dynein complex binding"/>
    <property type="evidence" value="ECO:0007669"/>
    <property type="project" value="UniProtKB-UniRule"/>
</dbReference>
<dbReference type="GO" id="GO:0051301">
    <property type="term" value="P:cell division"/>
    <property type="evidence" value="ECO:0007669"/>
    <property type="project" value="UniProtKB-KW"/>
</dbReference>
<dbReference type="GO" id="GO:0000132">
    <property type="term" value="P:establishment of mitotic spindle orientation"/>
    <property type="evidence" value="ECO:0007669"/>
    <property type="project" value="UniProtKB-UniRule"/>
</dbReference>
<dbReference type="GO" id="GO:0051012">
    <property type="term" value="P:microtubule sliding"/>
    <property type="evidence" value="ECO:0007669"/>
    <property type="project" value="UniProtKB-UniRule"/>
</dbReference>
<dbReference type="CDD" id="cd00200">
    <property type="entry name" value="WD40"/>
    <property type="match status" value="1"/>
</dbReference>
<dbReference type="FunFam" id="2.130.10.10:FF:000342">
    <property type="entry name" value="Nuclear distribution protein PAC1"/>
    <property type="match status" value="1"/>
</dbReference>
<dbReference type="FunFam" id="1.20.960.30:FF:000002">
    <property type="entry name" value="Platelet-activating factor acetylhydrolase ib"/>
    <property type="match status" value="1"/>
</dbReference>
<dbReference type="Gene3D" id="1.20.960.30">
    <property type="match status" value="1"/>
</dbReference>
<dbReference type="Gene3D" id="2.130.10.10">
    <property type="entry name" value="YVTN repeat-like/Quinoprotein amine dehydrogenase"/>
    <property type="match status" value="1"/>
</dbReference>
<dbReference type="HAMAP" id="MF_03141">
    <property type="entry name" value="lis1"/>
    <property type="match status" value="1"/>
</dbReference>
<dbReference type="InterPro" id="IPR017252">
    <property type="entry name" value="Dynein_regulator_LIS1"/>
</dbReference>
<dbReference type="InterPro" id="IPR020472">
    <property type="entry name" value="G-protein_beta_WD-40_rep"/>
</dbReference>
<dbReference type="InterPro" id="IPR037190">
    <property type="entry name" value="LIS1_N"/>
</dbReference>
<dbReference type="InterPro" id="IPR006594">
    <property type="entry name" value="LisH"/>
</dbReference>
<dbReference type="InterPro" id="IPR056795">
    <property type="entry name" value="PAC1-like_LisH-like_dom"/>
</dbReference>
<dbReference type="InterPro" id="IPR015943">
    <property type="entry name" value="WD40/YVTN_repeat-like_dom_sf"/>
</dbReference>
<dbReference type="InterPro" id="IPR019775">
    <property type="entry name" value="WD40_repeat_CS"/>
</dbReference>
<dbReference type="InterPro" id="IPR036322">
    <property type="entry name" value="WD40_repeat_dom_sf"/>
</dbReference>
<dbReference type="InterPro" id="IPR001680">
    <property type="entry name" value="WD40_rpt"/>
</dbReference>
<dbReference type="PANTHER" id="PTHR22847:SF637">
    <property type="entry name" value="WD REPEAT DOMAIN 5B"/>
    <property type="match status" value="1"/>
</dbReference>
<dbReference type="PANTHER" id="PTHR22847">
    <property type="entry name" value="WD40 REPEAT PROTEIN"/>
    <property type="match status" value="1"/>
</dbReference>
<dbReference type="Pfam" id="PF24951">
    <property type="entry name" value="LisH_PAC1"/>
    <property type="match status" value="1"/>
</dbReference>
<dbReference type="Pfam" id="PF00400">
    <property type="entry name" value="WD40"/>
    <property type="match status" value="6"/>
</dbReference>
<dbReference type="PIRSF" id="PIRSF037647">
    <property type="entry name" value="Dynein_regulator_Lis1"/>
    <property type="match status" value="1"/>
</dbReference>
<dbReference type="PRINTS" id="PR00320">
    <property type="entry name" value="GPROTEINBRPT"/>
</dbReference>
<dbReference type="SMART" id="SM00320">
    <property type="entry name" value="WD40"/>
    <property type="match status" value="7"/>
</dbReference>
<dbReference type="SUPFAM" id="SSF109925">
    <property type="entry name" value="Lissencephaly-1 protein (Lis-1, PAF-AH alpha) N-terminal domain"/>
    <property type="match status" value="1"/>
</dbReference>
<dbReference type="SUPFAM" id="SSF50978">
    <property type="entry name" value="WD40 repeat-like"/>
    <property type="match status" value="1"/>
</dbReference>
<dbReference type="PROSITE" id="PS50896">
    <property type="entry name" value="LISH"/>
    <property type="match status" value="1"/>
</dbReference>
<dbReference type="PROSITE" id="PS00678">
    <property type="entry name" value="WD_REPEATS_1"/>
    <property type="match status" value="3"/>
</dbReference>
<dbReference type="PROSITE" id="PS50082">
    <property type="entry name" value="WD_REPEATS_2"/>
    <property type="match status" value="6"/>
</dbReference>
<dbReference type="PROSITE" id="PS50294">
    <property type="entry name" value="WD_REPEATS_REGION"/>
    <property type="match status" value="1"/>
</dbReference>
<protein>
    <recommendedName>
        <fullName evidence="1">Nuclear distribution protein PAC1</fullName>
    </recommendedName>
    <alternativeName>
        <fullName evidence="1">Lissencephaly-1 homolog</fullName>
        <shortName evidence="1">LIS-1</shortName>
    </alternativeName>
    <alternativeName>
        <fullName evidence="1">nudF homolog</fullName>
    </alternativeName>
</protein>
<comment type="function">
    <text evidence="1">Positively regulates the activity of the minus-end directed microtubule motor protein dynein. May enhance dynein-mediated microtubule sliding by targeting dynein to the microtubule plus end. Required for nuclear migration during vegetative growth as well as development. Required for retrograde early endosome (EE) transport from the hyphal tip. Required for localization of dynein to the mitotic spindle poles. Recruits additional proteins to the dynein complex at SPBs.</text>
</comment>
<comment type="subunit">
    <text evidence="1">Self-associates. Interacts with NDL1 and dynein.</text>
</comment>
<comment type="subcellular location">
    <subcellularLocation>
        <location evidence="1">Cytoplasm</location>
        <location evidence="1">Cytoskeleton</location>
    </subcellularLocation>
    <subcellularLocation>
        <location evidence="1">Cytoplasm</location>
        <location evidence="1">Cytoskeleton</location>
        <location evidence="1">Spindle pole</location>
    </subcellularLocation>
    <text evidence="1">Localizes to the plus ends of microtubules at the hyphal tip and the mitotic spindle poles.</text>
</comment>
<comment type="domain">
    <text evidence="1">Dimerization mediated by the LisH domain may be required to activate dynein.</text>
</comment>
<comment type="similarity">
    <text evidence="1">Belongs to the WD repeat LIS1/nudF family.</text>
</comment>
<accession>D4DG66</accession>
<reference key="1">
    <citation type="journal article" date="2011" name="Genome Biol.">
        <title>Comparative and functional genomics provide insights into the pathogenicity of dermatophytic fungi.</title>
        <authorList>
            <person name="Burmester A."/>
            <person name="Shelest E."/>
            <person name="Gloeckner G."/>
            <person name="Heddergott C."/>
            <person name="Schindler S."/>
            <person name="Staib P."/>
            <person name="Heidel A."/>
            <person name="Felder M."/>
            <person name="Petzold A."/>
            <person name="Szafranski K."/>
            <person name="Feuermann M."/>
            <person name="Pedruzzi I."/>
            <person name="Priebe S."/>
            <person name="Groth M."/>
            <person name="Winkler R."/>
            <person name="Li W."/>
            <person name="Kniemeyer O."/>
            <person name="Schroeckh V."/>
            <person name="Hertweck C."/>
            <person name="Hube B."/>
            <person name="White T.C."/>
            <person name="Platzer M."/>
            <person name="Guthke R."/>
            <person name="Heitman J."/>
            <person name="Woestemeyer J."/>
            <person name="Zipfel P.F."/>
            <person name="Monod M."/>
            <person name="Brakhage A.A."/>
        </authorList>
    </citation>
    <scope>NUCLEOTIDE SEQUENCE [LARGE SCALE GENOMIC DNA]</scope>
    <source>
        <strain>HKI 0517</strain>
    </source>
</reference>
<organism>
    <name type="scientific">Trichophyton verrucosum (strain HKI 0517)</name>
    <dbReference type="NCBI Taxonomy" id="663202"/>
    <lineage>
        <taxon>Eukaryota</taxon>
        <taxon>Fungi</taxon>
        <taxon>Dikarya</taxon>
        <taxon>Ascomycota</taxon>
        <taxon>Pezizomycotina</taxon>
        <taxon>Eurotiomycetes</taxon>
        <taxon>Eurotiomycetidae</taxon>
        <taxon>Onygenales</taxon>
        <taxon>Arthrodermataceae</taxon>
        <taxon>Trichophyton</taxon>
    </lineage>
</organism>
<proteinExistence type="inferred from homology"/>
<evidence type="ECO:0000255" key="1">
    <source>
        <dbReference type="HAMAP-Rule" id="MF_03141"/>
    </source>
</evidence>
<name>LIS1_TRIVH</name>
<feature type="chain" id="PRO_0000405109" description="Nuclear distribution protein PAC1">
    <location>
        <begin position="1"/>
        <end position="461"/>
    </location>
</feature>
<feature type="domain" description="LisH" evidence="1">
    <location>
        <begin position="9"/>
        <end position="41"/>
    </location>
</feature>
<feature type="repeat" description="WD 1">
    <location>
        <begin position="114"/>
        <end position="155"/>
    </location>
</feature>
<feature type="repeat" description="WD 2">
    <location>
        <begin position="157"/>
        <end position="197"/>
    </location>
</feature>
<feature type="repeat" description="WD 3">
    <location>
        <begin position="201"/>
        <end position="248"/>
    </location>
</feature>
<feature type="repeat" description="WD 4">
    <location>
        <begin position="251"/>
        <end position="290"/>
    </location>
</feature>
<feature type="repeat" description="WD 5">
    <location>
        <begin position="312"/>
        <end position="355"/>
    </location>
</feature>
<feature type="repeat" description="WD 6">
    <location>
        <begin position="357"/>
        <end position="396"/>
    </location>
</feature>
<feature type="repeat" description="WD 7">
    <location>
        <begin position="401"/>
        <end position="446"/>
    </location>
</feature>
<feature type="repeat" description="WD 8">
    <location>
        <begin position="448"/>
        <end position="461"/>
    </location>
</feature>
<feature type="coiled-coil region" evidence="1">
    <location>
        <begin position="61"/>
        <end position="88"/>
    </location>
</feature>
<gene>
    <name evidence="1" type="primary">PAC1</name>
    <name evidence="1" type="synonym">LIS1</name>
    <name type="ORF">TRV_06168</name>
</gene>